<gene>
    <name evidence="1" type="primary">atpF</name>
    <name type="ordered locus">Arth_2609</name>
</gene>
<proteinExistence type="inferred from homology"/>
<evidence type="ECO:0000255" key="1">
    <source>
        <dbReference type="HAMAP-Rule" id="MF_01398"/>
    </source>
</evidence>
<name>ATPF_ARTS2</name>
<feature type="chain" id="PRO_0000368316" description="ATP synthase subunit b">
    <location>
        <begin position="1"/>
        <end position="182"/>
    </location>
</feature>
<feature type="transmembrane region" description="Helical" evidence="1">
    <location>
        <begin position="25"/>
        <end position="45"/>
    </location>
</feature>
<sequence length="182" mass="19435">MNQTIISAATEGTNPLVPNPWEMGVVLAGFAVLFYIVVKFVVPMFEKTFAERAEAIEGGIAKAEKAQAEASAALEEYKQQLTDARAEANRIREEARAEGAQILADLKEKAAAESARITAHAHAQIESERQAAVVSLRAEVGTLATTLASRIVGESLSDDARAARVVDRFLADLENQNAGAAK</sequence>
<accession>A0JY68</accession>
<organism>
    <name type="scientific">Arthrobacter sp. (strain FB24)</name>
    <dbReference type="NCBI Taxonomy" id="290399"/>
    <lineage>
        <taxon>Bacteria</taxon>
        <taxon>Bacillati</taxon>
        <taxon>Actinomycetota</taxon>
        <taxon>Actinomycetes</taxon>
        <taxon>Micrococcales</taxon>
        <taxon>Micrococcaceae</taxon>
        <taxon>Arthrobacter</taxon>
    </lineage>
</organism>
<keyword id="KW-0066">ATP synthesis</keyword>
<keyword id="KW-1003">Cell membrane</keyword>
<keyword id="KW-0138">CF(0)</keyword>
<keyword id="KW-0375">Hydrogen ion transport</keyword>
<keyword id="KW-0406">Ion transport</keyword>
<keyword id="KW-0472">Membrane</keyword>
<keyword id="KW-1185">Reference proteome</keyword>
<keyword id="KW-0812">Transmembrane</keyword>
<keyword id="KW-1133">Transmembrane helix</keyword>
<keyword id="KW-0813">Transport</keyword>
<protein>
    <recommendedName>
        <fullName evidence="1">ATP synthase subunit b</fullName>
    </recommendedName>
    <alternativeName>
        <fullName evidence="1">ATP synthase F(0) sector subunit b</fullName>
    </alternativeName>
    <alternativeName>
        <fullName evidence="1">ATPase subunit I</fullName>
    </alternativeName>
    <alternativeName>
        <fullName evidence="1">F-type ATPase subunit b</fullName>
        <shortName evidence="1">F-ATPase subunit b</shortName>
    </alternativeName>
</protein>
<comment type="function">
    <text evidence="1">F(1)F(0) ATP synthase produces ATP from ADP in the presence of a proton or sodium gradient. F-type ATPases consist of two structural domains, F(1) containing the extramembraneous catalytic core and F(0) containing the membrane proton channel, linked together by a central stalk and a peripheral stalk. During catalysis, ATP synthesis in the catalytic domain of F(1) is coupled via a rotary mechanism of the central stalk subunits to proton translocation.</text>
</comment>
<comment type="function">
    <text evidence="1">Component of the F(0) channel, it forms part of the peripheral stalk, linking F(1) to F(0).</text>
</comment>
<comment type="subunit">
    <text evidence="1">F-type ATPases have 2 components, F(1) - the catalytic core - and F(0) - the membrane proton channel. F(1) has five subunits: alpha(3), beta(3), gamma(1), delta(1), epsilon(1). F(0) has three main subunits: a(1), b(2) and c(10-14). The alpha and beta chains form an alternating ring which encloses part of the gamma chain. F(1) is attached to F(0) by a central stalk formed by the gamma and epsilon chains, while a peripheral stalk is formed by the delta and b chains.</text>
</comment>
<comment type="subcellular location">
    <subcellularLocation>
        <location evidence="1">Cell membrane</location>
        <topology evidence="1">Single-pass membrane protein</topology>
    </subcellularLocation>
</comment>
<comment type="similarity">
    <text evidence="1">Belongs to the ATPase B chain family.</text>
</comment>
<reference key="1">
    <citation type="journal article" date="2013" name="Stand. Genomic Sci.">
        <title>Complete genome sequence of Arthrobacter sp. strain FB24.</title>
        <authorList>
            <person name="Nakatsu C.H."/>
            <person name="Barabote R."/>
            <person name="Thompson S."/>
            <person name="Bruce D."/>
            <person name="Detter C."/>
            <person name="Brettin T."/>
            <person name="Han C."/>
            <person name="Beasley F."/>
            <person name="Chen W."/>
            <person name="Konopka A."/>
            <person name="Xie G."/>
        </authorList>
    </citation>
    <scope>NUCLEOTIDE SEQUENCE [LARGE SCALE GENOMIC DNA]</scope>
    <source>
        <strain>FB24</strain>
    </source>
</reference>
<dbReference type="EMBL" id="CP000454">
    <property type="protein sequence ID" value="ABK03988.1"/>
    <property type="molecule type" value="Genomic_DNA"/>
</dbReference>
<dbReference type="RefSeq" id="WP_011692450.1">
    <property type="nucleotide sequence ID" value="NC_008541.1"/>
</dbReference>
<dbReference type="SMR" id="A0JY68"/>
<dbReference type="STRING" id="290399.Arth_2609"/>
<dbReference type="KEGG" id="art:Arth_2609"/>
<dbReference type="eggNOG" id="COG0711">
    <property type="taxonomic scope" value="Bacteria"/>
</dbReference>
<dbReference type="HOGENOM" id="CLU_079215_5_1_11"/>
<dbReference type="OrthoDB" id="5243563at2"/>
<dbReference type="Proteomes" id="UP000000754">
    <property type="component" value="Chromosome"/>
</dbReference>
<dbReference type="GO" id="GO:0005886">
    <property type="term" value="C:plasma membrane"/>
    <property type="evidence" value="ECO:0007669"/>
    <property type="project" value="UniProtKB-SubCell"/>
</dbReference>
<dbReference type="GO" id="GO:0045259">
    <property type="term" value="C:proton-transporting ATP synthase complex"/>
    <property type="evidence" value="ECO:0007669"/>
    <property type="project" value="UniProtKB-KW"/>
</dbReference>
<dbReference type="GO" id="GO:0046933">
    <property type="term" value="F:proton-transporting ATP synthase activity, rotational mechanism"/>
    <property type="evidence" value="ECO:0007669"/>
    <property type="project" value="UniProtKB-UniRule"/>
</dbReference>
<dbReference type="GO" id="GO:0046961">
    <property type="term" value="F:proton-transporting ATPase activity, rotational mechanism"/>
    <property type="evidence" value="ECO:0007669"/>
    <property type="project" value="TreeGrafter"/>
</dbReference>
<dbReference type="CDD" id="cd06503">
    <property type="entry name" value="ATP-synt_Fo_b"/>
    <property type="match status" value="1"/>
</dbReference>
<dbReference type="Gene3D" id="1.20.5.620">
    <property type="entry name" value="F1F0 ATP synthase subunit B, membrane domain"/>
    <property type="match status" value="1"/>
</dbReference>
<dbReference type="HAMAP" id="MF_01398">
    <property type="entry name" value="ATP_synth_b_bprime"/>
    <property type="match status" value="1"/>
</dbReference>
<dbReference type="InterPro" id="IPR028987">
    <property type="entry name" value="ATP_synth_B-like_membr_sf"/>
</dbReference>
<dbReference type="InterPro" id="IPR002146">
    <property type="entry name" value="ATP_synth_b/b'su_bac/chlpt"/>
</dbReference>
<dbReference type="InterPro" id="IPR005864">
    <property type="entry name" value="ATP_synth_F0_bsu_bac"/>
</dbReference>
<dbReference type="InterPro" id="IPR050059">
    <property type="entry name" value="ATP_synthase_B_chain"/>
</dbReference>
<dbReference type="NCBIfam" id="TIGR01144">
    <property type="entry name" value="ATP_synt_b"/>
    <property type="match status" value="1"/>
</dbReference>
<dbReference type="NCBIfam" id="NF004412">
    <property type="entry name" value="PRK05759.1-3"/>
    <property type="match status" value="1"/>
</dbReference>
<dbReference type="PANTHER" id="PTHR33445:SF1">
    <property type="entry name" value="ATP SYNTHASE SUBUNIT B"/>
    <property type="match status" value="1"/>
</dbReference>
<dbReference type="PANTHER" id="PTHR33445">
    <property type="entry name" value="ATP SYNTHASE SUBUNIT B', CHLOROPLASTIC"/>
    <property type="match status" value="1"/>
</dbReference>
<dbReference type="Pfam" id="PF00430">
    <property type="entry name" value="ATP-synt_B"/>
    <property type="match status" value="1"/>
</dbReference>
<dbReference type="SUPFAM" id="SSF81573">
    <property type="entry name" value="F1F0 ATP synthase subunit B, membrane domain"/>
    <property type="match status" value="1"/>
</dbReference>